<name>RUVA_DINSH</name>
<comment type="function">
    <text evidence="1">The RuvA-RuvB-RuvC complex processes Holliday junction (HJ) DNA during genetic recombination and DNA repair, while the RuvA-RuvB complex plays an important role in the rescue of blocked DNA replication forks via replication fork reversal (RFR). RuvA specifically binds to HJ cruciform DNA, conferring on it an open structure. The RuvB hexamer acts as an ATP-dependent pump, pulling dsDNA into and through the RuvAB complex. HJ branch migration allows RuvC to scan DNA until it finds its consensus sequence, where it cleaves and resolves the cruciform DNA.</text>
</comment>
<comment type="subunit">
    <text evidence="1">Homotetramer. Forms an RuvA(8)-RuvB(12)-Holliday junction (HJ) complex. HJ DNA is sandwiched between 2 RuvA tetramers; dsDNA enters through RuvA and exits via RuvB. An RuvB hexamer assembles on each DNA strand where it exits the tetramer. Each RuvB hexamer is contacted by two RuvA subunits (via domain III) on 2 adjacent RuvB subunits; this complex drives branch migration. In the full resolvosome a probable DNA-RuvA(4)-RuvB(12)-RuvC(2) complex forms which resolves the HJ.</text>
</comment>
<comment type="subcellular location">
    <subcellularLocation>
        <location evidence="1">Cytoplasm</location>
    </subcellularLocation>
</comment>
<comment type="domain">
    <text evidence="1">Has three domains with a flexible linker between the domains II and III and assumes an 'L' shape. Domain III is highly mobile and contacts RuvB.</text>
</comment>
<comment type="similarity">
    <text evidence="1">Belongs to the RuvA family.</text>
</comment>
<gene>
    <name evidence="1" type="primary">ruvA</name>
    <name type="ordered locus">Dshi_1104</name>
</gene>
<organism>
    <name type="scientific">Dinoroseobacter shibae (strain DSM 16493 / NCIMB 14021 / DFL 12)</name>
    <dbReference type="NCBI Taxonomy" id="398580"/>
    <lineage>
        <taxon>Bacteria</taxon>
        <taxon>Pseudomonadati</taxon>
        <taxon>Pseudomonadota</taxon>
        <taxon>Alphaproteobacteria</taxon>
        <taxon>Rhodobacterales</taxon>
        <taxon>Roseobacteraceae</taxon>
        <taxon>Dinoroseobacter</taxon>
    </lineage>
</organism>
<keyword id="KW-0963">Cytoplasm</keyword>
<keyword id="KW-0227">DNA damage</keyword>
<keyword id="KW-0233">DNA recombination</keyword>
<keyword id="KW-0234">DNA repair</keyword>
<keyword id="KW-0238">DNA-binding</keyword>
<keyword id="KW-1185">Reference proteome</keyword>
<feature type="chain" id="PRO_1000074420" description="Holliday junction branch migration complex subunit RuvA">
    <location>
        <begin position="1"/>
        <end position="224"/>
    </location>
</feature>
<feature type="region of interest" description="Domain I" evidence="1">
    <location>
        <begin position="1"/>
        <end position="64"/>
    </location>
</feature>
<feature type="region of interest" description="Domain II" evidence="1">
    <location>
        <begin position="65"/>
        <end position="143"/>
    </location>
</feature>
<feature type="region of interest" description="Flexible linker" evidence="1">
    <location>
        <begin position="144"/>
        <end position="171"/>
    </location>
</feature>
<feature type="region of interest" description="Domain III" evidence="1">
    <location>
        <begin position="172"/>
        <end position="224"/>
    </location>
</feature>
<dbReference type="EMBL" id="CP000830">
    <property type="protein sequence ID" value="ABV92846.1"/>
    <property type="molecule type" value="Genomic_DNA"/>
</dbReference>
<dbReference type="RefSeq" id="WP_012177777.1">
    <property type="nucleotide sequence ID" value="NC_009952.1"/>
</dbReference>
<dbReference type="SMR" id="A8LHP9"/>
<dbReference type="STRING" id="398580.Dshi_1104"/>
<dbReference type="KEGG" id="dsh:Dshi_1104"/>
<dbReference type="eggNOG" id="COG0632">
    <property type="taxonomic scope" value="Bacteria"/>
</dbReference>
<dbReference type="HOGENOM" id="CLU_087936_3_0_5"/>
<dbReference type="OrthoDB" id="5293449at2"/>
<dbReference type="Proteomes" id="UP000006833">
    <property type="component" value="Chromosome"/>
</dbReference>
<dbReference type="GO" id="GO:0005737">
    <property type="term" value="C:cytoplasm"/>
    <property type="evidence" value="ECO:0007669"/>
    <property type="project" value="UniProtKB-SubCell"/>
</dbReference>
<dbReference type="GO" id="GO:0009379">
    <property type="term" value="C:Holliday junction helicase complex"/>
    <property type="evidence" value="ECO:0007669"/>
    <property type="project" value="InterPro"/>
</dbReference>
<dbReference type="GO" id="GO:0048476">
    <property type="term" value="C:Holliday junction resolvase complex"/>
    <property type="evidence" value="ECO:0007669"/>
    <property type="project" value="UniProtKB-UniRule"/>
</dbReference>
<dbReference type="GO" id="GO:0005524">
    <property type="term" value="F:ATP binding"/>
    <property type="evidence" value="ECO:0007669"/>
    <property type="project" value="InterPro"/>
</dbReference>
<dbReference type="GO" id="GO:0000400">
    <property type="term" value="F:four-way junction DNA binding"/>
    <property type="evidence" value="ECO:0007669"/>
    <property type="project" value="UniProtKB-UniRule"/>
</dbReference>
<dbReference type="GO" id="GO:0009378">
    <property type="term" value="F:four-way junction helicase activity"/>
    <property type="evidence" value="ECO:0007669"/>
    <property type="project" value="InterPro"/>
</dbReference>
<dbReference type="GO" id="GO:0006310">
    <property type="term" value="P:DNA recombination"/>
    <property type="evidence" value="ECO:0007669"/>
    <property type="project" value="UniProtKB-UniRule"/>
</dbReference>
<dbReference type="GO" id="GO:0006281">
    <property type="term" value="P:DNA repair"/>
    <property type="evidence" value="ECO:0007669"/>
    <property type="project" value="UniProtKB-UniRule"/>
</dbReference>
<dbReference type="Gene3D" id="1.10.150.20">
    <property type="entry name" value="5' to 3' exonuclease, C-terminal subdomain"/>
    <property type="match status" value="1"/>
</dbReference>
<dbReference type="Gene3D" id="1.10.8.10">
    <property type="entry name" value="DNA helicase RuvA subunit, C-terminal domain"/>
    <property type="match status" value="1"/>
</dbReference>
<dbReference type="Gene3D" id="2.40.50.140">
    <property type="entry name" value="Nucleic acid-binding proteins"/>
    <property type="match status" value="1"/>
</dbReference>
<dbReference type="HAMAP" id="MF_00031">
    <property type="entry name" value="DNA_HJ_migration_RuvA"/>
    <property type="match status" value="1"/>
</dbReference>
<dbReference type="InterPro" id="IPR013849">
    <property type="entry name" value="DNA_helicase_Holl-junc_RuvA_I"/>
</dbReference>
<dbReference type="InterPro" id="IPR012340">
    <property type="entry name" value="NA-bd_OB-fold"/>
</dbReference>
<dbReference type="InterPro" id="IPR000085">
    <property type="entry name" value="RuvA"/>
</dbReference>
<dbReference type="InterPro" id="IPR010994">
    <property type="entry name" value="RuvA_2-like"/>
</dbReference>
<dbReference type="InterPro" id="IPR011114">
    <property type="entry name" value="RuvA_C"/>
</dbReference>
<dbReference type="InterPro" id="IPR036267">
    <property type="entry name" value="RuvA_C_sf"/>
</dbReference>
<dbReference type="NCBIfam" id="TIGR00084">
    <property type="entry name" value="ruvA"/>
    <property type="match status" value="1"/>
</dbReference>
<dbReference type="Pfam" id="PF14520">
    <property type="entry name" value="HHH_5"/>
    <property type="match status" value="1"/>
</dbReference>
<dbReference type="Pfam" id="PF07499">
    <property type="entry name" value="RuvA_C"/>
    <property type="match status" value="1"/>
</dbReference>
<dbReference type="Pfam" id="PF01330">
    <property type="entry name" value="RuvA_N"/>
    <property type="match status" value="1"/>
</dbReference>
<dbReference type="SUPFAM" id="SSF46929">
    <property type="entry name" value="DNA helicase RuvA subunit, C-terminal domain"/>
    <property type="match status" value="1"/>
</dbReference>
<dbReference type="SUPFAM" id="SSF50249">
    <property type="entry name" value="Nucleic acid-binding proteins"/>
    <property type="match status" value="1"/>
</dbReference>
<dbReference type="SUPFAM" id="SSF47781">
    <property type="entry name" value="RuvA domain 2-like"/>
    <property type="match status" value="1"/>
</dbReference>
<accession>A8LHP9</accession>
<sequence>MIGRLSGVLVYRGRDHIVLDVRGVGYVVQCSERTLAGMPAPGGPVALFTELLVREDLLQLYGFPTLLEKEWHRLLTSVQGVGAKASMSILSTLGVDGVGRAIALGDWGALRKAQGVGPKIAQRVVNELKDKGPEVMAMGGTLEAALDGVIEDGMAASEGIEPPSAARPAVPSAASDQAGALSALVNLGYGQGEAASAVATAAGEGAVGETDIIRAALRLLAPKG</sequence>
<proteinExistence type="inferred from homology"/>
<reference key="1">
    <citation type="journal article" date="2010" name="ISME J.">
        <title>The complete genome sequence of the algal symbiont Dinoroseobacter shibae: a hitchhiker's guide to life in the sea.</title>
        <authorList>
            <person name="Wagner-Dobler I."/>
            <person name="Ballhausen B."/>
            <person name="Berger M."/>
            <person name="Brinkhoff T."/>
            <person name="Buchholz I."/>
            <person name="Bunk B."/>
            <person name="Cypionka H."/>
            <person name="Daniel R."/>
            <person name="Drepper T."/>
            <person name="Gerdts G."/>
            <person name="Hahnke S."/>
            <person name="Han C."/>
            <person name="Jahn D."/>
            <person name="Kalhoefer D."/>
            <person name="Kiss H."/>
            <person name="Klenk H.P."/>
            <person name="Kyrpides N."/>
            <person name="Liebl W."/>
            <person name="Liesegang H."/>
            <person name="Meincke L."/>
            <person name="Pati A."/>
            <person name="Petersen J."/>
            <person name="Piekarski T."/>
            <person name="Pommerenke C."/>
            <person name="Pradella S."/>
            <person name="Pukall R."/>
            <person name="Rabus R."/>
            <person name="Stackebrandt E."/>
            <person name="Thole S."/>
            <person name="Thompson L."/>
            <person name="Tielen P."/>
            <person name="Tomasch J."/>
            <person name="von Jan M."/>
            <person name="Wanphrut N."/>
            <person name="Wichels A."/>
            <person name="Zech H."/>
            <person name="Simon M."/>
        </authorList>
    </citation>
    <scope>NUCLEOTIDE SEQUENCE [LARGE SCALE GENOMIC DNA]</scope>
    <source>
        <strain>DSM 16493 / NCIMB 14021 / DFL 12</strain>
    </source>
</reference>
<protein>
    <recommendedName>
        <fullName evidence="1">Holliday junction branch migration complex subunit RuvA</fullName>
    </recommendedName>
</protein>
<evidence type="ECO:0000255" key="1">
    <source>
        <dbReference type="HAMAP-Rule" id="MF_00031"/>
    </source>
</evidence>